<organism>
    <name type="scientific">Campylobacter jejuni subsp. jejuni serotype O:23/36 (strain 81-176)</name>
    <dbReference type="NCBI Taxonomy" id="354242"/>
    <lineage>
        <taxon>Bacteria</taxon>
        <taxon>Pseudomonadati</taxon>
        <taxon>Campylobacterota</taxon>
        <taxon>Epsilonproteobacteria</taxon>
        <taxon>Campylobacterales</taxon>
        <taxon>Campylobacteraceae</taxon>
        <taxon>Campylobacter</taxon>
    </lineage>
</organism>
<sequence>MQENTRLRIAIQKSGRLSKESIELLSECGVKMHIHEQSLIAFSTNLPIDILRVRDDDIPGLIFDGVVDLGIIGENVLEENELERQSLGENPSYKLLKKLDFGYCRLSLALPQEKKFQNLKDFEGLRIATSYPQLLKRFMKENGINYKNCMLTGSVEVAPRANLADAICDLVSSGATLQANNLKEVKVIYESRACLIQKENALSKEKQTLVDKIMLRVAGVMQARESKYIMLHAPKEKLDKIQALLPGVERPTILPLAHDEKNVALHMVSKENLFWETMEALKEEGASSILVLPIEKMLK</sequence>
<feature type="chain" id="PRO_1000004451" description="ATP phosphoribosyltransferase">
    <location>
        <begin position="1"/>
        <end position="299"/>
    </location>
</feature>
<name>HIS1_CAMJJ</name>
<proteinExistence type="inferred from homology"/>
<protein>
    <recommendedName>
        <fullName evidence="1">ATP phosphoribosyltransferase</fullName>
        <shortName evidence="1">ATP-PRT</shortName>
        <shortName evidence="1">ATP-PRTase</shortName>
        <ecNumber evidence="1">2.4.2.17</ecNumber>
    </recommendedName>
</protein>
<gene>
    <name evidence="1" type="primary">hisG</name>
    <name type="ordered locus">CJJ81176_1584</name>
</gene>
<dbReference type="EC" id="2.4.2.17" evidence="1"/>
<dbReference type="EMBL" id="CP000538">
    <property type="protein sequence ID" value="EAQ72861.1"/>
    <property type="molecule type" value="Genomic_DNA"/>
</dbReference>
<dbReference type="RefSeq" id="WP_002868826.1">
    <property type="nucleotide sequence ID" value="NC_008787.1"/>
</dbReference>
<dbReference type="SMR" id="A1W1J9"/>
<dbReference type="KEGG" id="cjj:CJJ81176_1584"/>
<dbReference type="eggNOG" id="COG0040">
    <property type="taxonomic scope" value="Bacteria"/>
</dbReference>
<dbReference type="HOGENOM" id="CLU_038115_1_0_7"/>
<dbReference type="UniPathway" id="UPA00031">
    <property type="reaction ID" value="UER00006"/>
</dbReference>
<dbReference type="Proteomes" id="UP000000646">
    <property type="component" value="Chromosome"/>
</dbReference>
<dbReference type="GO" id="GO:0005737">
    <property type="term" value="C:cytoplasm"/>
    <property type="evidence" value="ECO:0007669"/>
    <property type="project" value="UniProtKB-SubCell"/>
</dbReference>
<dbReference type="GO" id="GO:0005524">
    <property type="term" value="F:ATP binding"/>
    <property type="evidence" value="ECO:0007669"/>
    <property type="project" value="UniProtKB-KW"/>
</dbReference>
<dbReference type="GO" id="GO:0003879">
    <property type="term" value="F:ATP phosphoribosyltransferase activity"/>
    <property type="evidence" value="ECO:0007669"/>
    <property type="project" value="UniProtKB-UniRule"/>
</dbReference>
<dbReference type="GO" id="GO:0000287">
    <property type="term" value="F:magnesium ion binding"/>
    <property type="evidence" value="ECO:0007669"/>
    <property type="project" value="UniProtKB-UniRule"/>
</dbReference>
<dbReference type="GO" id="GO:0000105">
    <property type="term" value="P:L-histidine biosynthetic process"/>
    <property type="evidence" value="ECO:0007669"/>
    <property type="project" value="UniProtKB-UniRule"/>
</dbReference>
<dbReference type="CDD" id="cd13592">
    <property type="entry name" value="PBP2_HisGL2"/>
    <property type="match status" value="1"/>
</dbReference>
<dbReference type="FunFam" id="3.30.70.120:FF:000002">
    <property type="entry name" value="ATP phosphoribosyltransferase"/>
    <property type="match status" value="1"/>
</dbReference>
<dbReference type="FunFam" id="3.40.190.10:FF:000008">
    <property type="entry name" value="ATP phosphoribosyltransferase"/>
    <property type="match status" value="1"/>
</dbReference>
<dbReference type="Gene3D" id="3.30.70.120">
    <property type="match status" value="1"/>
</dbReference>
<dbReference type="Gene3D" id="3.40.190.10">
    <property type="entry name" value="Periplasmic binding protein-like II"/>
    <property type="match status" value="2"/>
</dbReference>
<dbReference type="HAMAP" id="MF_00079">
    <property type="entry name" value="HisG_Long"/>
    <property type="match status" value="1"/>
</dbReference>
<dbReference type="InterPro" id="IPR020621">
    <property type="entry name" value="ATP-PRT_HisG_long"/>
</dbReference>
<dbReference type="InterPro" id="IPR013820">
    <property type="entry name" value="ATP_PRibTrfase_cat"/>
</dbReference>
<dbReference type="InterPro" id="IPR018198">
    <property type="entry name" value="ATP_PRibTrfase_CS"/>
</dbReference>
<dbReference type="InterPro" id="IPR001348">
    <property type="entry name" value="ATP_PRibTrfase_HisG"/>
</dbReference>
<dbReference type="InterPro" id="IPR013115">
    <property type="entry name" value="HisG_C"/>
</dbReference>
<dbReference type="InterPro" id="IPR011322">
    <property type="entry name" value="N-reg_PII-like_a/b"/>
</dbReference>
<dbReference type="InterPro" id="IPR015867">
    <property type="entry name" value="N-reg_PII/ATP_PRibTrfase_C"/>
</dbReference>
<dbReference type="NCBIfam" id="TIGR00070">
    <property type="entry name" value="hisG"/>
    <property type="match status" value="1"/>
</dbReference>
<dbReference type="NCBIfam" id="TIGR03455">
    <property type="entry name" value="HisG_C-term"/>
    <property type="match status" value="1"/>
</dbReference>
<dbReference type="PANTHER" id="PTHR21403:SF8">
    <property type="entry name" value="ATP PHOSPHORIBOSYLTRANSFERASE"/>
    <property type="match status" value="1"/>
</dbReference>
<dbReference type="PANTHER" id="PTHR21403">
    <property type="entry name" value="ATP PHOSPHORIBOSYLTRANSFERASE ATP-PRTASE"/>
    <property type="match status" value="1"/>
</dbReference>
<dbReference type="Pfam" id="PF01634">
    <property type="entry name" value="HisG"/>
    <property type="match status" value="1"/>
</dbReference>
<dbReference type="Pfam" id="PF08029">
    <property type="entry name" value="HisG_C"/>
    <property type="match status" value="1"/>
</dbReference>
<dbReference type="SUPFAM" id="SSF54913">
    <property type="entry name" value="GlnB-like"/>
    <property type="match status" value="1"/>
</dbReference>
<dbReference type="SUPFAM" id="SSF53850">
    <property type="entry name" value="Periplasmic binding protein-like II"/>
    <property type="match status" value="1"/>
</dbReference>
<dbReference type="PROSITE" id="PS01316">
    <property type="entry name" value="ATP_P_PHORIBOSYLTR"/>
    <property type="match status" value="1"/>
</dbReference>
<comment type="function">
    <text evidence="1">Catalyzes the condensation of ATP and 5-phosphoribose 1-diphosphate to form N'-(5'-phosphoribosyl)-ATP (PR-ATP). Has a crucial role in the pathway because the rate of histidine biosynthesis seems to be controlled primarily by regulation of HisG enzymatic activity.</text>
</comment>
<comment type="catalytic activity">
    <reaction evidence="1">
        <text>1-(5-phospho-beta-D-ribosyl)-ATP + diphosphate = 5-phospho-alpha-D-ribose 1-diphosphate + ATP</text>
        <dbReference type="Rhea" id="RHEA:18473"/>
        <dbReference type="ChEBI" id="CHEBI:30616"/>
        <dbReference type="ChEBI" id="CHEBI:33019"/>
        <dbReference type="ChEBI" id="CHEBI:58017"/>
        <dbReference type="ChEBI" id="CHEBI:73183"/>
        <dbReference type="EC" id="2.4.2.17"/>
    </reaction>
</comment>
<comment type="cofactor">
    <cofactor evidence="1">
        <name>Mg(2+)</name>
        <dbReference type="ChEBI" id="CHEBI:18420"/>
    </cofactor>
</comment>
<comment type="activity regulation">
    <text evidence="1">Feedback inhibited by histidine.</text>
</comment>
<comment type="pathway">
    <text evidence="1">Amino-acid biosynthesis; L-histidine biosynthesis; L-histidine from 5-phospho-alpha-D-ribose 1-diphosphate: step 1/9.</text>
</comment>
<comment type="subcellular location">
    <subcellularLocation>
        <location evidence="1">Cytoplasm</location>
    </subcellularLocation>
</comment>
<comment type="similarity">
    <text evidence="1">Belongs to the ATP phosphoribosyltransferase family. Long subfamily.</text>
</comment>
<reference key="1">
    <citation type="submission" date="2006-12" db="EMBL/GenBank/DDBJ databases">
        <authorList>
            <person name="Fouts D.E."/>
            <person name="Nelson K.E."/>
            <person name="Sebastian Y."/>
        </authorList>
    </citation>
    <scope>NUCLEOTIDE SEQUENCE [LARGE SCALE GENOMIC DNA]</scope>
    <source>
        <strain>81-176</strain>
    </source>
</reference>
<evidence type="ECO:0000255" key="1">
    <source>
        <dbReference type="HAMAP-Rule" id="MF_00079"/>
    </source>
</evidence>
<keyword id="KW-0028">Amino-acid biosynthesis</keyword>
<keyword id="KW-0067">ATP-binding</keyword>
<keyword id="KW-0963">Cytoplasm</keyword>
<keyword id="KW-0328">Glycosyltransferase</keyword>
<keyword id="KW-0368">Histidine biosynthesis</keyword>
<keyword id="KW-0460">Magnesium</keyword>
<keyword id="KW-0479">Metal-binding</keyword>
<keyword id="KW-0547">Nucleotide-binding</keyword>
<keyword id="KW-0808">Transferase</keyword>
<accession>A1W1J9</accession>